<name>KUP2_LEGPA</name>
<reference key="1">
    <citation type="journal article" date="2004" name="Nat. Genet.">
        <title>Evidence in the Legionella pneumophila genome for exploitation of host cell functions and high genome plasticity.</title>
        <authorList>
            <person name="Cazalet C."/>
            <person name="Rusniok C."/>
            <person name="Brueggemann H."/>
            <person name="Zidane N."/>
            <person name="Magnier A."/>
            <person name="Ma L."/>
            <person name="Tichit M."/>
            <person name="Jarraud S."/>
            <person name="Bouchier C."/>
            <person name="Vandenesch F."/>
            <person name="Kunst F."/>
            <person name="Etienne J."/>
            <person name="Glaser P."/>
            <person name="Buchrieser C."/>
        </authorList>
    </citation>
    <scope>NUCLEOTIDE SEQUENCE [LARGE SCALE GENOMIC DNA]</scope>
    <source>
        <strain>Paris</strain>
    </source>
</reference>
<gene>
    <name evidence="1" type="primary">kup2</name>
    <name type="ordered locus">lpp2064</name>
</gene>
<organism>
    <name type="scientific">Legionella pneumophila (strain Paris)</name>
    <dbReference type="NCBI Taxonomy" id="297246"/>
    <lineage>
        <taxon>Bacteria</taxon>
        <taxon>Pseudomonadati</taxon>
        <taxon>Pseudomonadota</taxon>
        <taxon>Gammaproteobacteria</taxon>
        <taxon>Legionellales</taxon>
        <taxon>Legionellaceae</taxon>
        <taxon>Legionella</taxon>
    </lineage>
</organism>
<evidence type="ECO:0000255" key="1">
    <source>
        <dbReference type="HAMAP-Rule" id="MF_01522"/>
    </source>
</evidence>
<keyword id="KW-0997">Cell inner membrane</keyword>
<keyword id="KW-1003">Cell membrane</keyword>
<keyword id="KW-0406">Ion transport</keyword>
<keyword id="KW-0472">Membrane</keyword>
<keyword id="KW-0630">Potassium</keyword>
<keyword id="KW-0633">Potassium transport</keyword>
<keyword id="KW-0769">Symport</keyword>
<keyword id="KW-0812">Transmembrane</keyword>
<keyword id="KW-1133">Transmembrane helix</keyword>
<keyword id="KW-0813">Transport</keyword>
<proteinExistence type="inferred from homology"/>
<protein>
    <recommendedName>
        <fullName evidence="1">Probable potassium transport system protein Kup 2</fullName>
    </recommendedName>
</protein>
<accession>Q5X3H2</accession>
<feature type="chain" id="PRO_0000209030" description="Probable potassium transport system protein Kup 2">
    <location>
        <begin position="1"/>
        <end position="625"/>
    </location>
</feature>
<feature type="transmembrane region" description="Helical" evidence="1">
    <location>
        <begin position="15"/>
        <end position="35"/>
    </location>
</feature>
<feature type="transmembrane region" description="Helical" evidence="1">
    <location>
        <begin position="52"/>
        <end position="72"/>
    </location>
</feature>
<feature type="transmembrane region" description="Helical" evidence="1">
    <location>
        <begin position="98"/>
        <end position="118"/>
    </location>
</feature>
<feature type="transmembrane region" description="Helical" evidence="1">
    <location>
        <begin position="134"/>
        <end position="154"/>
    </location>
</feature>
<feature type="transmembrane region" description="Helical" evidence="1">
    <location>
        <begin position="164"/>
        <end position="184"/>
    </location>
</feature>
<feature type="transmembrane region" description="Helical" evidence="1">
    <location>
        <begin position="212"/>
        <end position="232"/>
    </location>
</feature>
<feature type="transmembrane region" description="Helical" evidence="1">
    <location>
        <begin position="246"/>
        <end position="266"/>
    </location>
</feature>
<feature type="transmembrane region" description="Helical" evidence="1">
    <location>
        <begin position="284"/>
        <end position="304"/>
    </location>
</feature>
<feature type="transmembrane region" description="Helical" evidence="1">
    <location>
        <begin position="336"/>
        <end position="356"/>
    </location>
</feature>
<feature type="transmembrane region" description="Helical" evidence="1">
    <location>
        <begin position="365"/>
        <end position="385"/>
    </location>
</feature>
<feature type="transmembrane region" description="Helical" evidence="1">
    <location>
        <begin position="394"/>
        <end position="414"/>
    </location>
</feature>
<feature type="transmembrane region" description="Helical" evidence="1">
    <location>
        <begin position="417"/>
        <end position="437"/>
    </location>
</feature>
<dbReference type="EMBL" id="CR628336">
    <property type="protein sequence ID" value="CAH13216.1"/>
    <property type="molecule type" value="Genomic_DNA"/>
</dbReference>
<dbReference type="RefSeq" id="WP_015961280.1">
    <property type="nucleotide sequence ID" value="NC_006368.1"/>
</dbReference>
<dbReference type="KEGG" id="lpp:lpp2064"/>
<dbReference type="LegioList" id="lpp2064"/>
<dbReference type="HOGENOM" id="CLU_008142_4_2_6"/>
<dbReference type="GO" id="GO:0005886">
    <property type="term" value="C:plasma membrane"/>
    <property type="evidence" value="ECO:0007669"/>
    <property type="project" value="UniProtKB-SubCell"/>
</dbReference>
<dbReference type="GO" id="GO:0015079">
    <property type="term" value="F:potassium ion transmembrane transporter activity"/>
    <property type="evidence" value="ECO:0007669"/>
    <property type="project" value="UniProtKB-UniRule"/>
</dbReference>
<dbReference type="GO" id="GO:0015293">
    <property type="term" value="F:symporter activity"/>
    <property type="evidence" value="ECO:0007669"/>
    <property type="project" value="UniProtKB-UniRule"/>
</dbReference>
<dbReference type="HAMAP" id="MF_01522">
    <property type="entry name" value="Kup"/>
    <property type="match status" value="1"/>
</dbReference>
<dbReference type="InterPro" id="IPR003855">
    <property type="entry name" value="K+_transporter"/>
</dbReference>
<dbReference type="InterPro" id="IPR053952">
    <property type="entry name" value="K_trans_C"/>
</dbReference>
<dbReference type="InterPro" id="IPR053951">
    <property type="entry name" value="K_trans_N"/>
</dbReference>
<dbReference type="InterPro" id="IPR023051">
    <property type="entry name" value="Kup"/>
</dbReference>
<dbReference type="PANTHER" id="PTHR30540:SF83">
    <property type="entry name" value="K+ POTASSIUM TRANSPORTER"/>
    <property type="match status" value="1"/>
</dbReference>
<dbReference type="PANTHER" id="PTHR30540">
    <property type="entry name" value="OSMOTIC STRESS POTASSIUM TRANSPORTER"/>
    <property type="match status" value="1"/>
</dbReference>
<dbReference type="Pfam" id="PF02705">
    <property type="entry name" value="K_trans"/>
    <property type="match status" value="1"/>
</dbReference>
<dbReference type="Pfam" id="PF22776">
    <property type="entry name" value="K_trans_C"/>
    <property type="match status" value="1"/>
</dbReference>
<comment type="function">
    <text evidence="1">Transport of potassium into the cell. Likely operates as a K(+):H(+) symporter.</text>
</comment>
<comment type="catalytic activity">
    <reaction evidence="1">
        <text>K(+)(in) + H(+)(in) = K(+)(out) + H(+)(out)</text>
        <dbReference type="Rhea" id="RHEA:28490"/>
        <dbReference type="ChEBI" id="CHEBI:15378"/>
        <dbReference type="ChEBI" id="CHEBI:29103"/>
    </reaction>
    <physiologicalReaction direction="right-to-left" evidence="1">
        <dbReference type="Rhea" id="RHEA:28492"/>
    </physiologicalReaction>
</comment>
<comment type="subcellular location">
    <subcellularLocation>
        <location evidence="1">Cell inner membrane</location>
        <topology evidence="1">Multi-pass membrane protein</topology>
    </subcellularLocation>
</comment>
<comment type="similarity">
    <text evidence="1">Belongs to the HAK/KUP transporter (TC 2.A.72) family.</text>
</comment>
<sequence>MMNESLTEKRNELSLSFAALGVVFGDIGTSPLYAFGQVIKYFPINDHNIYGILSLIFWSLIIIVSIKYLVIVFRADNDGEGGIIALAGVIRQKIKQPGGWLLFITLVGIGLIIGDGMLTPAISILSAVEGLESLSPNLAKYVLPVTLIILFFLFKMQSIGTGKIGVYFAPVMLVWFITIGILGFLQIIQNPKVLMAINPYYAINFFMIHKYFALFILGGVFLVMTGGEALFADLGHFGKKAIRTGWFAVALPALLLCYFGQGAFVLMHTEDIKYPFFSLSPDWFLPVMIILATLATIIASQAIISAAFSILKQASLLNLIPRLKIVFTSKFEKGEVYLPLINFILALGTCSLVVIFKSSSNLADAYGIAVNLDMLITTVLVGIIAYRCWSWHAFKILIFLLILIIELAFFAGNIPKLLTGGWIPILIAFLGFVVMYTWHCGFEKLRELHHRDALMDAFIIDELNQNKISRQPGMGLYIIDPYDCEGESLLHHLRLNRIFFENMVFVSIKIENKPYIPIEDKFELIKKAEGFYLIFIHYGFTENINLPNELDEMFKRVYLPFDIIKNKLIYFIEIVFVEMTGERQKHMYLWQKHFFSLMIRNAVPDIQFYQLPYNNTIAIGTYYQF</sequence>